<evidence type="ECO:0000250" key="1"/>
<evidence type="ECO:0000255" key="2">
    <source>
        <dbReference type="PROSITE-ProRule" id="PRU00238"/>
    </source>
</evidence>
<sequence length="148" mass="16373">MVDWTDAERAAISSLWGKIDVGEIGPQALTRLLIVYPWTQRHFTTFGNVSTNAAILGNPKVAQHGKTVMGGLENAVKNLDDIKNTYAKLSQMHSEKLHVDPDNFRTLAECISVCVAAKFGKQVFTADVQEAWQKFLSVVVSALGRQYH</sequence>
<name>HBBA_SERQU</name>
<reference key="1">
    <citation type="submission" date="1999-11" db="EMBL/GenBank/DDBJ databases">
        <title>Yellowtail's mRNA for hemoglobin beta chain A.</title>
        <authorList>
            <person name="Sakai M."/>
            <person name="Okamoto K."/>
        </authorList>
    </citation>
    <scope>NUCLEOTIDE SEQUENCE [MRNA]</scope>
    <source>
        <tissue>Kidney</tissue>
    </source>
</reference>
<feature type="initiator methionine" description="Removed" evidence="1">
    <location>
        <position position="1"/>
    </location>
</feature>
<feature type="chain" id="PRO_0000053103" description="Hemoglobin subunit beta-A">
    <location>
        <begin position="2"/>
        <end position="148"/>
    </location>
</feature>
<feature type="domain" description="Globin" evidence="2">
    <location>
        <begin position="3"/>
        <end position="148"/>
    </location>
</feature>
<feature type="binding site" description="distal binding residue">
    <location>
        <position position="64"/>
    </location>
    <ligand>
        <name>heme b</name>
        <dbReference type="ChEBI" id="CHEBI:60344"/>
    </ligand>
    <ligandPart>
        <name>Fe</name>
        <dbReference type="ChEBI" id="CHEBI:18248"/>
    </ligandPart>
</feature>
<feature type="binding site" description="proximal binding residue">
    <location>
        <position position="93"/>
    </location>
    <ligand>
        <name>heme b</name>
        <dbReference type="ChEBI" id="CHEBI:60344"/>
    </ligand>
    <ligandPart>
        <name>Fe</name>
        <dbReference type="ChEBI" id="CHEBI:18248"/>
    </ligandPart>
</feature>
<gene>
    <name type="primary">hbb1</name>
</gene>
<dbReference type="EMBL" id="AB034641">
    <property type="protein sequence ID" value="BAA86220.1"/>
    <property type="molecule type" value="mRNA"/>
</dbReference>
<dbReference type="SMR" id="Q9PVM2"/>
<dbReference type="GO" id="GO:0072562">
    <property type="term" value="C:blood microparticle"/>
    <property type="evidence" value="ECO:0007669"/>
    <property type="project" value="TreeGrafter"/>
</dbReference>
<dbReference type="GO" id="GO:0031838">
    <property type="term" value="C:haptoglobin-hemoglobin complex"/>
    <property type="evidence" value="ECO:0007669"/>
    <property type="project" value="TreeGrafter"/>
</dbReference>
<dbReference type="GO" id="GO:0005833">
    <property type="term" value="C:hemoglobin complex"/>
    <property type="evidence" value="ECO:0007669"/>
    <property type="project" value="InterPro"/>
</dbReference>
<dbReference type="GO" id="GO:0031720">
    <property type="term" value="F:haptoglobin binding"/>
    <property type="evidence" value="ECO:0007669"/>
    <property type="project" value="TreeGrafter"/>
</dbReference>
<dbReference type="GO" id="GO:0020037">
    <property type="term" value="F:heme binding"/>
    <property type="evidence" value="ECO:0007669"/>
    <property type="project" value="InterPro"/>
</dbReference>
<dbReference type="GO" id="GO:0046872">
    <property type="term" value="F:metal ion binding"/>
    <property type="evidence" value="ECO:0007669"/>
    <property type="project" value="UniProtKB-KW"/>
</dbReference>
<dbReference type="GO" id="GO:0043177">
    <property type="term" value="F:organic acid binding"/>
    <property type="evidence" value="ECO:0007669"/>
    <property type="project" value="TreeGrafter"/>
</dbReference>
<dbReference type="GO" id="GO:0019825">
    <property type="term" value="F:oxygen binding"/>
    <property type="evidence" value="ECO:0007669"/>
    <property type="project" value="InterPro"/>
</dbReference>
<dbReference type="GO" id="GO:0005344">
    <property type="term" value="F:oxygen carrier activity"/>
    <property type="evidence" value="ECO:0007669"/>
    <property type="project" value="UniProtKB-KW"/>
</dbReference>
<dbReference type="GO" id="GO:0004601">
    <property type="term" value="F:peroxidase activity"/>
    <property type="evidence" value="ECO:0007669"/>
    <property type="project" value="TreeGrafter"/>
</dbReference>
<dbReference type="GO" id="GO:0042744">
    <property type="term" value="P:hydrogen peroxide catabolic process"/>
    <property type="evidence" value="ECO:0007669"/>
    <property type="project" value="TreeGrafter"/>
</dbReference>
<dbReference type="CDD" id="cd08925">
    <property type="entry name" value="Hb-beta-like"/>
    <property type="match status" value="1"/>
</dbReference>
<dbReference type="FunFam" id="1.10.490.10:FF:000001">
    <property type="entry name" value="Hemoglobin subunit beta"/>
    <property type="match status" value="1"/>
</dbReference>
<dbReference type="Gene3D" id="1.10.490.10">
    <property type="entry name" value="Globins"/>
    <property type="match status" value="1"/>
</dbReference>
<dbReference type="InterPro" id="IPR000971">
    <property type="entry name" value="Globin"/>
</dbReference>
<dbReference type="InterPro" id="IPR009050">
    <property type="entry name" value="Globin-like_sf"/>
</dbReference>
<dbReference type="InterPro" id="IPR012292">
    <property type="entry name" value="Globin/Proto"/>
</dbReference>
<dbReference type="InterPro" id="IPR002337">
    <property type="entry name" value="Hemoglobin_b"/>
</dbReference>
<dbReference type="InterPro" id="IPR050056">
    <property type="entry name" value="Hemoglobin_oxygen_transport"/>
</dbReference>
<dbReference type="PANTHER" id="PTHR11442">
    <property type="entry name" value="HEMOGLOBIN FAMILY MEMBER"/>
    <property type="match status" value="1"/>
</dbReference>
<dbReference type="PANTHER" id="PTHR11442:SF102">
    <property type="entry name" value="HEMOGLOBIN SUBUNIT BETA-1-RELATED"/>
    <property type="match status" value="1"/>
</dbReference>
<dbReference type="Pfam" id="PF00042">
    <property type="entry name" value="Globin"/>
    <property type="match status" value="1"/>
</dbReference>
<dbReference type="PRINTS" id="PR00814">
    <property type="entry name" value="BETAHAEM"/>
</dbReference>
<dbReference type="SUPFAM" id="SSF46458">
    <property type="entry name" value="Globin-like"/>
    <property type="match status" value="1"/>
</dbReference>
<dbReference type="PROSITE" id="PS01033">
    <property type="entry name" value="GLOBIN"/>
    <property type="match status" value="1"/>
</dbReference>
<comment type="function">
    <text>Involved in oxygen transport from gills to the various peripheral tissues.</text>
</comment>
<comment type="subunit">
    <text>Heterotetramer of two alpha chains and two beta chains.</text>
</comment>
<comment type="tissue specificity">
    <text>Red blood cells.</text>
</comment>
<comment type="similarity">
    <text evidence="2">Belongs to the globin family.</text>
</comment>
<keyword id="KW-0349">Heme</keyword>
<keyword id="KW-0408">Iron</keyword>
<keyword id="KW-0479">Metal-binding</keyword>
<keyword id="KW-0561">Oxygen transport</keyword>
<keyword id="KW-0813">Transport</keyword>
<organism>
    <name type="scientific">Seriola quinqueradiata</name>
    <name type="common">Five-ray yellowtail</name>
    <dbReference type="NCBI Taxonomy" id="8161"/>
    <lineage>
        <taxon>Eukaryota</taxon>
        <taxon>Metazoa</taxon>
        <taxon>Chordata</taxon>
        <taxon>Craniata</taxon>
        <taxon>Vertebrata</taxon>
        <taxon>Euteleostomi</taxon>
        <taxon>Actinopterygii</taxon>
        <taxon>Neopterygii</taxon>
        <taxon>Teleostei</taxon>
        <taxon>Neoteleostei</taxon>
        <taxon>Acanthomorphata</taxon>
        <taxon>Carangaria</taxon>
        <taxon>Carangiformes</taxon>
        <taxon>Carangidae</taxon>
        <taxon>Seriola</taxon>
    </lineage>
</organism>
<protein>
    <recommendedName>
        <fullName>Hemoglobin subunit beta-A</fullName>
    </recommendedName>
    <alternativeName>
        <fullName>Beta-A-globin</fullName>
    </alternativeName>
    <alternativeName>
        <fullName>Hemoglobin beta-A chain</fullName>
    </alternativeName>
</protein>
<accession>Q9PVM2</accession>
<proteinExistence type="evidence at transcript level"/>